<gene>
    <name evidence="1" type="primary">atpI</name>
    <name type="ORF">PSC016</name>
</gene>
<protein>
    <recommendedName>
        <fullName evidence="1">ATP synthase subunit a, chloroplastic</fullName>
    </recommendedName>
    <alternativeName>
        <fullName evidence="1">ATP synthase F0 sector subunit a</fullName>
    </alternativeName>
    <alternativeName>
        <fullName evidence="1">F-ATPase subunit IV</fullName>
    </alternativeName>
</protein>
<feature type="chain" id="PRO_0000362565" description="ATP synthase subunit a, chloroplastic">
    <location>
        <begin position="1"/>
        <end position="247"/>
    </location>
</feature>
<feature type="transmembrane region" description="Helical" evidence="1">
    <location>
        <begin position="38"/>
        <end position="58"/>
    </location>
</feature>
<feature type="transmembrane region" description="Helical" evidence="1">
    <location>
        <begin position="95"/>
        <end position="115"/>
    </location>
</feature>
<feature type="transmembrane region" description="Helical" evidence="1">
    <location>
        <begin position="134"/>
        <end position="154"/>
    </location>
</feature>
<feature type="transmembrane region" description="Helical" evidence="1">
    <location>
        <begin position="199"/>
        <end position="219"/>
    </location>
</feature>
<feature type="transmembrane region" description="Helical" evidence="1">
    <location>
        <begin position="220"/>
        <end position="240"/>
    </location>
</feature>
<dbReference type="EMBL" id="AY865171">
    <property type="protein sequence ID" value="AAX58146.1"/>
    <property type="molecule type" value="Genomic_DNA"/>
</dbReference>
<dbReference type="EMBL" id="DQ383816">
    <property type="protein sequence ID" value="ABD47224.1"/>
    <property type="molecule type" value="Genomic_DNA"/>
</dbReference>
<dbReference type="EMBL" id="AP007232">
    <property type="protein sequence ID" value="BAE47585.1"/>
    <property type="molecule type" value="Genomic_DNA"/>
</dbReference>
<dbReference type="RefSeq" id="YP_398320.1">
    <property type="nucleotide sequence ID" value="NC_007578.1"/>
</dbReference>
<dbReference type="SMR" id="Q56P09"/>
<dbReference type="GeneID" id="3772794"/>
<dbReference type="KEGG" id="lsv:3772794"/>
<dbReference type="OrthoDB" id="2303at2759"/>
<dbReference type="GO" id="GO:0009535">
    <property type="term" value="C:chloroplast thylakoid membrane"/>
    <property type="evidence" value="ECO:0007669"/>
    <property type="project" value="UniProtKB-SubCell"/>
</dbReference>
<dbReference type="GO" id="GO:0005886">
    <property type="term" value="C:plasma membrane"/>
    <property type="evidence" value="ECO:0007669"/>
    <property type="project" value="UniProtKB-UniRule"/>
</dbReference>
<dbReference type="GO" id="GO:0045259">
    <property type="term" value="C:proton-transporting ATP synthase complex"/>
    <property type="evidence" value="ECO:0007669"/>
    <property type="project" value="UniProtKB-KW"/>
</dbReference>
<dbReference type="GO" id="GO:0046933">
    <property type="term" value="F:proton-transporting ATP synthase activity, rotational mechanism"/>
    <property type="evidence" value="ECO:0007669"/>
    <property type="project" value="UniProtKB-UniRule"/>
</dbReference>
<dbReference type="CDD" id="cd00310">
    <property type="entry name" value="ATP-synt_Fo_a_6"/>
    <property type="match status" value="1"/>
</dbReference>
<dbReference type="FunFam" id="1.20.120.220:FF:000001">
    <property type="entry name" value="ATP synthase subunit a, chloroplastic"/>
    <property type="match status" value="1"/>
</dbReference>
<dbReference type="Gene3D" id="1.20.120.220">
    <property type="entry name" value="ATP synthase, F0 complex, subunit A"/>
    <property type="match status" value="1"/>
</dbReference>
<dbReference type="HAMAP" id="MF_01393">
    <property type="entry name" value="ATP_synth_a_bact"/>
    <property type="match status" value="1"/>
</dbReference>
<dbReference type="InterPro" id="IPR045082">
    <property type="entry name" value="ATP_syn_F0_a_bact/chloroplast"/>
</dbReference>
<dbReference type="InterPro" id="IPR000568">
    <property type="entry name" value="ATP_synth_F0_asu"/>
</dbReference>
<dbReference type="InterPro" id="IPR023011">
    <property type="entry name" value="ATP_synth_F0_asu_AS"/>
</dbReference>
<dbReference type="InterPro" id="IPR035908">
    <property type="entry name" value="F0_ATP_A_sf"/>
</dbReference>
<dbReference type="NCBIfam" id="TIGR01131">
    <property type="entry name" value="ATP_synt_6_or_A"/>
    <property type="match status" value="1"/>
</dbReference>
<dbReference type="PANTHER" id="PTHR42823">
    <property type="entry name" value="ATP SYNTHASE SUBUNIT A, CHLOROPLASTIC"/>
    <property type="match status" value="1"/>
</dbReference>
<dbReference type="PANTHER" id="PTHR42823:SF3">
    <property type="entry name" value="ATP SYNTHASE SUBUNIT A, CHLOROPLASTIC"/>
    <property type="match status" value="1"/>
</dbReference>
<dbReference type="Pfam" id="PF00119">
    <property type="entry name" value="ATP-synt_A"/>
    <property type="match status" value="1"/>
</dbReference>
<dbReference type="PRINTS" id="PR00123">
    <property type="entry name" value="ATPASEA"/>
</dbReference>
<dbReference type="SUPFAM" id="SSF81336">
    <property type="entry name" value="F1F0 ATP synthase subunit A"/>
    <property type="match status" value="1"/>
</dbReference>
<dbReference type="PROSITE" id="PS00449">
    <property type="entry name" value="ATPASE_A"/>
    <property type="match status" value="1"/>
</dbReference>
<sequence>MNVLSCSINTLNGLYDISGVEVGQHFYWKIGGFQVHGQVLITSWVVIAILLASATLAVRNPQTIPTSGQNFFEYVLEFIRDVSKTQIGEEYGPWVPFIGTMFLFIFVSNWSGALLPWKIIQLPHGELAAPTNDINTTVALALLTSVAYFYAGLSKKGLGYFGKYIQPTPILLPINILEDFTKPLSLSFRLFGNILADELVVVVLVSLVPSVVPIPVMFLGLFTSGIQALIFATLAAAYIGESMEGHH</sequence>
<proteinExistence type="inferred from homology"/>
<accession>Q56P09</accession>
<evidence type="ECO:0000255" key="1">
    <source>
        <dbReference type="HAMAP-Rule" id="MF_01393"/>
    </source>
</evidence>
<name>ATPI_LACSA</name>
<organism>
    <name type="scientific">Lactuca sativa</name>
    <name type="common">Garden lettuce</name>
    <dbReference type="NCBI Taxonomy" id="4236"/>
    <lineage>
        <taxon>Eukaryota</taxon>
        <taxon>Viridiplantae</taxon>
        <taxon>Streptophyta</taxon>
        <taxon>Embryophyta</taxon>
        <taxon>Tracheophyta</taxon>
        <taxon>Spermatophyta</taxon>
        <taxon>Magnoliopsida</taxon>
        <taxon>eudicotyledons</taxon>
        <taxon>Gunneridae</taxon>
        <taxon>Pentapetalae</taxon>
        <taxon>asterids</taxon>
        <taxon>campanulids</taxon>
        <taxon>Asterales</taxon>
        <taxon>Asteraceae</taxon>
        <taxon>Cichorioideae</taxon>
        <taxon>Cichorieae</taxon>
        <taxon>Lactucinae</taxon>
        <taxon>Lactuca</taxon>
    </lineage>
</organism>
<keyword id="KW-0066">ATP synthesis</keyword>
<keyword id="KW-0138">CF(0)</keyword>
<keyword id="KW-0150">Chloroplast</keyword>
<keyword id="KW-0375">Hydrogen ion transport</keyword>
<keyword id="KW-0406">Ion transport</keyword>
<keyword id="KW-0472">Membrane</keyword>
<keyword id="KW-0934">Plastid</keyword>
<keyword id="KW-0793">Thylakoid</keyword>
<keyword id="KW-0812">Transmembrane</keyword>
<keyword id="KW-1133">Transmembrane helix</keyword>
<keyword id="KW-0813">Transport</keyword>
<reference key="1">
    <citation type="journal article" date="2005" name="Mol. Biol. Evol.">
        <title>Two chloroplast DNA inversions originated simultaneously during the early evolution of the sunflower family (Asteraceae).</title>
        <authorList>
            <person name="Kim K.-J."/>
            <person name="Choi K.-S."/>
            <person name="Jansen R.K."/>
        </authorList>
    </citation>
    <scope>NUCLEOTIDE SEQUENCE [GENOMIC DNA]</scope>
</reference>
<reference key="2">
    <citation type="journal article" date="2006" name="Transgenic Res.">
        <title>Efficient and stable transformation of Lactuca sativa L. cv. Cisco (lettuce) plastids.</title>
        <authorList>
            <person name="Kanamoto H."/>
            <person name="Yamashita A."/>
            <person name="Asao H."/>
            <person name="Okumura S."/>
            <person name="Takase H."/>
            <person name="Hattori M."/>
            <person name="Yokota A."/>
            <person name="Tomizawa K."/>
        </authorList>
    </citation>
    <scope>NUCLEOTIDE SEQUENCE [LARGE SCALE GENOMIC DNA]</scope>
    <source>
        <strain>cv. Cisco</strain>
    </source>
</reference>
<reference key="3">
    <citation type="submission" date="2006-01" db="EMBL/GenBank/DDBJ databases">
        <title>A comparison of the first two published chloroplast genomes in Asteraceae: Lactuca and Helianthus.</title>
        <authorList>
            <person name="Timme R.E."/>
            <person name="Kuehl J.V."/>
            <person name="Boore J.L."/>
            <person name="Jansen R.K."/>
        </authorList>
    </citation>
    <scope>NUCLEOTIDE SEQUENCE [LARGE SCALE GENOMIC DNA]</scope>
    <source>
        <strain>cv. Salinas</strain>
    </source>
</reference>
<comment type="function">
    <text evidence="1">Key component of the proton channel; it plays a direct role in the translocation of protons across the membrane.</text>
</comment>
<comment type="subunit">
    <text evidence="1">F-type ATPases have 2 components, CF(1) - the catalytic core - and CF(0) - the membrane proton channel. CF(1) has five subunits: alpha(3), beta(3), gamma(1), delta(1), epsilon(1). CF(0) has four main subunits: a, b, b' and c.</text>
</comment>
<comment type="subcellular location">
    <subcellularLocation>
        <location evidence="1">Plastid</location>
        <location evidence="1">Chloroplast thylakoid membrane</location>
        <topology evidence="1">Multi-pass membrane protein</topology>
    </subcellularLocation>
</comment>
<comment type="similarity">
    <text evidence="1">Belongs to the ATPase A chain family.</text>
</comment>
<geneLocation type="chloroplast"/>